<gene>
    <name evidence="1" type="primary">moaC</name>
    <name type="ordered locus">MS1022</name>
</gene>
<name>MOAC_MANSM</name>
<dbReference type="EC" id="4.6.1.17" evidence="1"/>
<dbReference type="EMBL" id="AE016827">
    <property type="protein sequence ID" value="AAU37629.1"/>
    <property type="molecule type" value="Genomic_DNA"/>
</dbReference>
<dbReference type="RefSeq" id="WP_011200199.1">
    <property type="nucleotide sequence ID" value="NC_006300.1"/>
</dbReference>
<dbReference type="SMR" id="Q65TT1"/>
<dbReference type="STRING" id="221988.MS1022"/>
<dbReference type="KEGG" id="msu:MS1022"/>
<dbReference type="eggNOG" id="COG0315">
    <property type="taxonomic scope" value="Bacteria"/>
</dbReference>
<dbReference type="HOGENOM" id="CLU_074693_1_1_6"/>
<dbReference type="OrthoDB" id="9794429at2"/>
<dbReference type="UniPathway" id="UPA00344"/>
<dbReference type="Proteomes" id="UP000000607">
    <property type="component" value="Chromosome"/>
</dbReference>
<dbReference type="GO" id="GO:0061799">
    <property type="term" value="F:cyclic pyranopterin monophosphate synthase activity"/>
    <property type="evidence" value="ECO:0007669"/>
    <property type="project" value="UniProtKB-UniRule"/>
</dbReference>
<dbReference type="GO" id="GO:0061798">
    <property type="term" value="F:GTP 3',8'-cyclase activity"/>
    <property type="evidence" value="ECO:0007669"/>
    <property type="project" value="TreeGrafter"/>
</dbReference>
<dbReference type="GO" id="GO:0006777">
    <property type="term" value="P:Mo-molybdopterin cofactor biosynthetic process"/>
    <property type="evidence" value="ECO:0007669"/>
    <property type="project" value="UniProtKB-UniRule"/>
</dbReference>
<dbReference type="CDD" id="cd01420">
    <property type="entry name" value="MoaC_PE"/>
    <property type="match status" value="1"/>
</dbReference>
<dbReference type="FunFam" id="3.30.70.640:FF:000001">
    <property type="entry name" value="Cyclic pyranopterin monophosphate synthase"/>
    <property type="match status" value="1"/>
</dbReference>
<dbReference type="Gene3D" id="3.30.70.640">
    <property type="entry name" value="Molybdopterin cofactor biosynthesis C (MoaC) domain"/>
    <property type="match status" value="1"/>
</dbReference>
<dbReference type="HAMAP" id="MF_01224_B">
    <property type="entry name" value="MoaC_B"/>
    <property type="match status" value="1"/>
</dbReference>
<dbReference type="InterPro" id="IPR023045">
    <property type="entry name" value="MoaC"/>
</dbReference>
<dbReference type="InterPro" id="IPR047594">
    <property type="entry name" value="MoaC_bact/euk"/>
</dbReference>
<dbReference type="InterPro" id="IPR036522">
    <property type="entry name" value="MoaC_sf"/>
</dbReference>
<dbReference type="InterPro" id="IPR050105">
    <property type="entry name" value="MoCo_biosynth_MoaA/MoaC"/>
</dbReference>
<dbReference type="InterPro" id="IPR002820">
    <property type="entry name" value="Mopterin_CF_biosynth-C_dom"/>
</dbReference>
<dbReference type="NCBIfam" id="TIGR00581">
    <property type="entry name" value="moaC"/>
    <property type="match status" value="1"/>
</dbReference>
<dbReference type="NCBIfam" id="NF006870">
    <property type="entry name" value="PRK09364.1"/>
    <property type="match status" value="1"/>
</dbReference>
<dbReference type="PANTHER" id="PTHR22960:SF0">
    <property type="entry name" value="MOLYBDENUM COFACTOR BIOSYNTHESIS PROTEIN 1"/>
    <property type="match status" value="1"/>
</dbReference>
<dbReference type="PANTHER" id="PTHR22960">
    <property type="entry name" value="MOLYBDOPTERIN COFACTOR SYNTHESIS PROTEIN A"/>
    <property type="match status" value="1"/>
</dbReference>
<dbReference type="Pfam" id="PF01967">
    <property type="entry name" value="MoaC"/>
    <property type="match status" value="1"/>
</dbReference>
<dbReference type="SUPFAM" id="SSF55040">
    <property type="entry name" value="Molybdenum cofactor biosynthesis protein C, MoaC"/>
    <property type="match status" value="1"/>
</dbReference>
<feature type="chain" id="PRO_1000054107" description="Cyclic pyranopterin monophosphate synthase">
    <location>
        <begin position="1"/>
        <end position="158"/>
    </location>
</feature>
<feature type="active site" evidence="1">
    <location>
        <position position="128"/>
    </location>
</feature>
<feature type="binding site" evidence="1">
    <location>
        <begin position="75"/>
        <end position="77"/>
    </location>
    <ligand>
        <name>substrate</name>
    </ligand>
</feature>
<feature type="binding site" evidence="1">
    <location>
        <begin position="113"/>
        <end position="114"/>
    </location>
    <ligand>
        <name>substrate</name>
    </ligand>
</feature>
<reference key="1">
    <citation type="journal article" date="2004" name="Nat. Biotechnol.">
        <title>The genome sequence of the capnophilic rumen bacterium Mannheimia succiniciproducens.</title>
        <authorList>
            <person name="Hong S.H."/>
            <person name="Kim J.S."/>
            <person name="Lee S.Y."/>
            <person name="In Y.H."/>
            <person name="Choi S.S."/>
            <person name="Rih J.-K."/>
            <person name="Kim C.H."/>
            <person name="Jeong H."/>
            <person name="Hur C.G."/>
            <person name="Kim J.J."/>
        </authorList>
    </citation>
    <scope>NUCLEOTIDE SEQUENCE [LARGE SCALE GENOMIC DNA]</scope>
    <source>
        <strain>KCTC 0769BP / MBEL55E</strain>
    </source>
</reference>
<comment type="function">
    <text evidence="1">Catalyzes the conversion of (8S)-3',8-cyclo-7,8-dihydroguanosine 5'-triphosphate to cyclic pyranopterin monophosphate (cPMP).</text>
</comment>
<comment type="catalytic activity">
    <reaction evidence="1">
        <text>(8S)-3',8-cyclo-7,8-dihydroguanosine 5'-triphosphate = cyclic pyranopterin phosphate + diphosphate</text>
        <dbReference type="Rhea" id="RHEA:49580"/>
        <dbReference type="ChEBI" id="CHEBI:33019"/>
        <dbReference type="ChEBI" id="CHEBI:59648"/>
        <dbReference type="ChEBI" id="CHEBI:131766"/>
        <dbReference type="EC" id="4.6.1.17"/>
    </reaction>
</comment>
<comment type="pathway">
    <text evidence="1">Cofactor biosynthesis; molybdopterin biosynthesis.</text>
</comment>
<comment type="subunit">
    <text evidence="1">Homohexamer; trimer of dimers.</text>
</comment>
<comment type="similarity">
    <text evidence="1">Belongs to the MoaC family.</text>
</comment>
<accession>Q65TT1</accession>
<protein>
    <recommendedName>
        <fullName evidence="1">Cyclic pyranopterin monophosphate synthase</fullName>
        <ecNumber evidence="1">4.6.1.17</ecNumber>
    </recommendedName>
    <alternativeName>
        <fullName evidence="1">Molybdenum cofactor biosynthesis protein C</fullName>
    </alternativeName>
</protein>
<evidence type="ECO:0000255" key="1">
    <source>
        <dbReference type="HAMAP-Rule" id="MF_01224"/>
    </source>
</evidence>
<proteinExistence type="inferred from homology"/>
<sequence length="158" mass="17215">MTEFTHINSNGEANMVDVSNKRETVREARAEAFVSMSAETLAMIVSGEHHKGDVFATARIAGIQAAKRTWELIPLCHPLLLSKVEVKLTALLDTNQVRIESLCKLTGKTGVEMEALTAASVAALTIYDMCKAVQKDMVISNVRLLEKTGGKSGHFKVE</sequence>
<organism>
    <name type="scientific">Mannheimia succiniciproducens (strain KCTC 0769BP / MBEL55E)</name>
    <dbReference type="NCBI Taxonomy" id="221988"/>
    <lineage>
        <taxon>Bacteria</taxon>
        <taxon>Pseudomonadati</taxon>
        <taxon>Pseudomonadota</taxon>
        <taxon>Gammaproteobacteria</taxon>
        <taxon>Pasteurellales</taxon>
        <taxon>Pasteurellaceae</taxon>
        <taxon>Basfia</taxon>
    </lineage>
</organism>
<keyword id="KW-0456">Lyase</keyword>
<keyword id="KW-0501">Molybdenum cofactor biosynthesis</keyword>